<keyword id="KW-1185">Reference proteome</keyword>
<keyword id="KW-0687">Ribonucleoprotein</keyword>
<keyword id="KW-0689">Ribosomal protein</keyword>
<keyword id="KW-0694">RNA-binding</keyword>
<keyword id="KW-0699">rRNA-binding</keyword>
<keyword id="KW-0820">tRNA-binding</keyword>
<dbReference type="EMBL" id="CP001037">
    <property type="protein sequence ID" value="ACC82741.1"/>
    <property type="molecule type" value="Genomic_DNA"/>
</dbReference>
<dbReference type="RefSeq" id="WP_012410704.1">
    <property type="nucleotide sequence ID" value="NC_010628.1"/>
</dbReference>
<dbReference type="SMR" id="B2ITN3"/>
<dbReference type="STRING" id="63737.Npun_R4368"/>
<dbReference type="EnsemblBacteria" id="ACC82741">
    <property type="protein sequence ID" value="ACC82741"/>
    <property type="gene ID" value="Npun_R4368"/>
</dbReference>
<dbReference type="KEGG" id="npu:Npun_R4368"/>
<dbReference type="eggNOG" id="COG0099">
    <property type="taxonomic scope" value="Bacteria"/>
</dbReference>
<dbReference type="HOGENOM" id="CLU_103849_1_2_3"/>
<dbReference type="OrthoDB" id="9803610at2"/>
<dbReference type="PhylomeDB" id="B2ITN3"/>
<dbReference type="Proteomes" id="UP000001191">
    <property type="component" value="Chromosome"/>
</dbReference>
<dbReference type="GO" id="GO:0005829">
    <property type="term" value="C:cytosol"/>
    <property type="evidence" value="ECO:0007669"/>
    <property type="project" value="TreeGrafter"/>
</dbReference>
<dbReference type="GO" id="GO:0015935">
    <property type="term" value="C:small ribosomal subunit"/>
    <property type="evidence" value="ECO:0007669"/>
    <property type="project" value="TreeGrafter"/>
</dbReference>
<dbReference type="GO" id="GO:0019843">
    <property type="term" value="F:rRNA binding"/>
    <property type="evidence" value="ECO:0007669"/>
    <property type="project" value="UniProtKB-UniRule"/>
</dbReference>
<dbReference type="GO" id="GO:0003735">
    <property type="term" value="F:structural constituent of ribosome"/>
    <property type="evidence" value="ECO:0007669"/>
    <property type="project" value="InterPro"/>
</dbReference>
<dbReference type="GO" id="GO:0000049">
    <property type="term" value="F:tRNA binding"/>
    <property type="evidence" value="ECO:0007669"/>
    <property type="project" value="UniProtKB-UniRule"/>
</dbReference>
<dbReference type="GO" id="GO:0006412">
    <property type="term" value="P:translation"/>
    <property type="evidence" value="ECO:0007669"/>
    <property type="project" value="UniProtKB-UniRule"/>
</dbReference>
<dbReference type="FunFam" id="1.10.8.50:FF:000001">
    <property type="entry name" value="30S ribosomal protein S13"/>
    <property type="match status" value="1"/>
</dbReference>
<dbReference type="FunFam" id="4.10.910.10:FF:000001">
    <property type="entry name" value="30S ribosomal protein S13"/>
    <property type="match status" value="1"/>
</dbReference>
<dbReference type="Gene3D" id="1.10.8.50">
    <property type="match status" value="1"/>
</dbReference>
<dbReference type="Gene3D" id="4.10.910.10">
    <property type="entry name" value="30s ribosomal protein s13, domain 2"/>
    <property type="match status" value="1"/>
</dbReference>
<dbReference type="HAMAP" id="MF_01315">
    <property type="entry name" value="Ribosomal_uS13"/>
    <property type="match status" value="1"/>
</dbReference>
<dbReference type="InterPro" id="IPR027437">
    <property type="entry name" value="Rbsml_uS13_C"/>
</dbReference>
<dbReference type="InterPro" id="IPR001892">
    <property type="entry name" value="Ribosomal_uS13"/>
</dbReference>
<dbReference type="InterPro" id="IPR010979">
    <property type="entry name" value="Ribosomal_uS13-like_H2TH"/>
</dbReference>
<dbReference type="InterPro" id="IPR019980">
    <property type="entry name" value="Ribosomal_uS13_bac-type"/>
</dbReference>
<dbReference type="InterPro" id="IPR018269">
    <property type="entry name" value="Ribosomal_uS13_CS"/>
</dbReference>
<dbReference type="NCBIfam" id="TIGR03631">
    <property type="entry name" value="uS13_bact"/>
    <property type="match status" value="1"/>
</dbReference>
<dbReference type="PANTHER" id="PTHR10871">
    <property type="entry name" value="30S RIBOSOMAL PROTEIN S13/40S RIBOSOMAL PROTEIN S18"/>
    <property type="match status" value="1"/>
</dbReference>
<dbReference type="PANTHER" id="PTHR10871:SF1">
    <property type="entry name" value="SMALL RIBOSOMAL SUBUNIT PROTEIN US13M"/>
    <property type="match status" value="1"/>
</dbReference>
<dbReference type="Pfam" id="PF00416">
    <property type="entry name" value="Ribosomal_S13"/>
    <property type="match status" value="1"/>
</dbReference>
<dbReference type="PIRSF" id="PIRSF002134">
    <property type="entry name" value="Ribosomal_S13"/>
    <property type="match status" value="1"/>
</dbReference>
<dbReference type="SUPFAM" id="SSF46946">
    <property type="entry name" value="S13-like H2TH domain"/>
    <property type="match status" value="1"/>
</dbReference>
<dbReference type="PROSITE" id="PS00646">
    <property type="entry name" value="RIBOSOMAL_S13_1"/>
    <property type="match status" value="1"/>
</dbReference>
<dbReference type="PROSITE" id="PS50159">
    <property type="entry name" value="RIBOSOMAL_S13_2"/>
    <property type="match status" value="1"/>
</dbReference>
<feature type="chain" id="PRO_1000141294" description="Small ribosomal subunit protein uS13">
    <location>
        <begin position="1"/>
        <end position="126"/>
    </location>
</feature>
<feature type="region of interest" description="Disordered" evidence="2">
    <location>
        <begin position="92"/>
        <end position="126"/>
    </location>
</feature>
<feature type="compositionally biased region" description="Basic residues" evidence="2">
    <location>
        <begin position="101"/>
        <end position="126"/>
    </location>
</feature>
<evidence type="ECO:0000255" key="1">
    <source>
        <dbReference type="HAMAP-Rule" id="MF_01315"/>
    </source>
</evidence>
<evidence type="ECO:0000256" key="2">
    <source>
        <dbReference type="SAM" id="MobiDB-lite"/>
    </source>
</evidence>
<evidence type="ECO:0000305" key="3"/>
<name>RS13_NOSP7</name>
<protein>
    <recommendedName>
        <fullName evidence="1">Small ribosomal subunit protein uS13</fullName>
    </recommendedName>
    <alternativeName>
        <fullName evidence="3">30S ribosomal protein S13</fullName>
    </alternativeName>
</protein>
<gene>
    <name evidence="1" type="primary">rpsM</name>
    <name evidence="1" type="synonym">rps13</name>
    <name type="ordered locus">Npun_R4368</name>
</gene>
<sequence>MARIAGVDLPRDKRVEIGLTYIYGIGLSRAQEIIAATGVNPDTRVKDLSDADVTALRGEIESNYQVEGDLRRLESLNIKRLVDIGTYRGRRHRMGLPVRGQRTRTNARTRRGRRQTVAGKKKAPGK</sequence>
<organism>
    <name type="scientific">Nostoc punctiforme (strain ATCC 29133 / PCC 73102)</name>
    <dbReference type="NCBI Taxonomy" id="63737"/>
    <lineage>
        <taxon>Bacteria</taxon>
        <taxon>Bacillati</taxon>
        <taxon>Cyanobacteriota</taxon>
        <taxon>Cyanophyceae</taxon>
        <taxon>Nostocales</taxon>
        <taxon>Nostocaceae</taxon>
        <taxon>Nostoc</taxon>
    </lineage>
</organism>
<proteinExistence type="inferred from homology"/>
<accession>B2ITN3</accession>
<comment type="function">
    <text evidence="1">Located at the top of the head of the 30S subunit, it contacts several helices of the 16S rRNA. In the 70S ribosome it contacts the 23S rRNA (bridge B1a) and protein L5 of the 50S subunit (bridge B1b), connecting the 2 subunits; these bridges are implicated in subunit movement. Contacts the tRNAs in the A and P-sites.</text>
</comment>
<comment type="subunit">
    <text evidence="1">Part of the 30S ribosomal subunit. Forms a loose heterodimer with protein S19. Forms two bridges to the 50S subunit in the 70S ribosome.</text>
</comment>
<comment type="similarity">
    <text evidence="1">Belongs to the universal ribosomal protein uS13 family.</text>
</comment>
<reference key="1">
    <citation type="journal article" date="2013" name="Plant Physiol.">
        <title>A Nostoc punctiforme Sugar Transporter Necessary to Establish a Cyanobacterium-Plant Symbiosis.</title>
        <authorList>
            <person name="Ekman M."/>
            <person name="Picossi S."/>
            <person name="Campbell E.L."/>
            <person name="Meeks J.C."/>
            <person name="Flores E."/>
        </authorList>
    </citation>
    <scope>NUCLEOTIDE SEQUENCE [LARGE SCALE GENOMIC DNA]</scope>
    <source>
        <strain>ATCC 29133 / PCC 73102</strain>
    </source>
</reference>